<feature type="chain" id="PRO_0000137565" description="Inorganic pyrophosphatase">
    <location>
        <begin position="1"/>
        <end position="29" status="greater than"/>
    </location>
</feature>
<feature type="non-terminal residue">
    <location>
        <position position="29"/>
    </location>
</feature>
<dbReference type="EC" id="3.6.1.1"/>
<dbReference type="PIR" id="A35687">
    <property type="entry name" value="A35687"/>
</dbReference>
<dbReference type="GO" id="GO:0042597">
    <property type="term" value="C:periplasmic space"/>
    <property type="evidence" value="ECO:0007669"/>
    <property type="project" value="UniProtKB-SubCell"/>
</dbReference>
<dbReference type="GO" id="GO:0004427">
    <property type="term" value="F:inorganic diphosphate phosphatase activity"/>
    <property type="evidence" value="ECO:0007669"/>
    <property type="project" value="UniProtKB-EC"/>
</dbReference>
<comment type="function">
    <text>Inorganic pyrophosphatase is an essential enzyme for the activation of sulfate by sulfate reducing bacteria. This is a high activity pyrophosphatase.</text>
</comment>
<comment type="catalytic activity">
    <reaction>
        <text>diphosphate + H2O = 2 phosphate + H(+)</text>
        <dbReference type="Rhea" id="RHEA:24576"/>
        <dbReference type="ChEBI" id="CHEBI:15377"/>
        <dbReference type="ChEBI" id="CHEBI:15378"/>
        <dbReference type="ChEBI" id="CHEBI:33019"/>
        <dbReference type="ChEBI" id="CHEBI:43474"/>
        <dbReference type="EC" id="3.6.1.1"/>
    </reaction>
</comment>
<comment type="subcellular location">
    <subcellularLocation>
        <location evidence="1">Periplasm</location>
    </subcellularLocation>
</comment>
<accession>P19371</accession>
<protein>
    <recommendedName>
        <fullName>Inorganic pyrophosphatase</fullName>
        <ecNumber>3.6.1.1</ecNumber>
    </recommendedName>
    <alternativeName>
        <fullName>Pyrophosphate phospho-hydrolase</fullName>
        <shortName>PPase</shortName>
    </alternativeName>
</protein>
<name>IPYR_NITV2</name>
<evidence type="ECO:0000305" key="1"/>
<keyword id="KW-0903">Direct protein sequencing</keyword>
<keyword id="KW-0378">Hydrolase</keyword>
<keyword id="KW-0574">Periplasm</keyword>
<organism>
    <name type="scientific">Nitratidesulfovibrio vulgaris (strain ATCC 29579 / DSM 644 / CCUG 34227 / NCIMB 8303 / VKM B-1760 / Hildenborough)</name>
    <name type="common">Desulfovibrio vulgaris</name>
    <dbReference type="NCBI Taxonomy" id="882"/>
    <lineage>
        <taxon>Bacteria</taxon>
        <taxon>Pseudomonadati</taxon>
        <taxon>Thermodesulfobacteriota</taxon>
        <taxon>Desulfovibrionia</taxon>
        <taxon>Desulfovibrionales</taxon>
        <taxon>Desulfovibrionaceae</taxon>
        <taxon>Nitratidesulfovibrio</taxon>
    </lineage>
</organism>
<proteinExistence type="evidence at protein level"/>
<reference key="1">
    <citation type="journal article" date="1990" name="Biochem. Biophys. Res. Commun.">
        <title>Purification and characterization of two proteins with inorganic pyrophosphatase activity from Desulfovibrio vulgaris: rubrerythrin and a new, highly active, enzyme.</title>
        <authorList>
            <person name="Liu M.-Y."/>
            <person name="le Gall J."/>
        </authorList>
    </citation>
    <scope>PROTEIN SEQUENCE</scope>
</reference>
<sequence length="29" mass="3201">NYTIGNDNVLTEPLSEIKTAGLMYKMGVQ</sequence>